<proteinExistence type="inferred from homology"/>
<organism>
    <name type="scientific">Vibrio cholerae serotype O1 (strain ATCC 39315 / El Tor Inaba N16961)</name>
    <dbReference type="NCBI Taxonomy" id="243277"/>
    <lineage>
        <taxon>Bacteria</taxon>
        <taxon>Pseudomonadati</taxon>
        <taxon>Pseudomonadota</taxon>
        <taxon>Gammaproteobacteria</taxon>
        <taxon>Vibrionales</taxon>
        <taxon>Vibrionaceae</taxon>
        <taxon>Vibrio</taxon>
    </lineage>
</organism>
<evidence type="ECO:0000250" key="1"/>
<evidence type="ECO:0000255" key="2"/>
<evidence type="ECO:0000305" key="3"/>
<feature type="signal peptide" evidence="2">
    <location>
        <begin position="1"/>
        <end position="18"/>
    </location>
</feature>
<feature type="chain" id="PRO_0000009526" description="Flagellar P-ring protein">
    <location>
        <begin position="19"/>
        <end position="361"/>
    </location>
</feature>
<feature type="sequence conflict" description="In Ref. 1; AAC33161." evidence="3" ref="1">
    <original>G</original>
    <variation>A</variation>
    <location>
        <position position="177"/>
    </location>
</feature>
<accession>Q9KQ14</accession>
<accession>O30854</accession>
<dbReference type="EMBL" id="AF019213">
    <property type="protein sequence ID" value="AAC33161.1"/>
    <property type="molecule type" value="Genomic_DNA"/>
</dbReference>
<dbReference type="EMBL" id="AE003852">
    <property type="protein sequence ID" value="AAF95338.1"/>
    <property type="molecule type" value="Genomic_DNA"/>
</dbReference>
<dbReference type="PIR" id="H82105">
    <property type="entry name" value="H82105"/>
</dbReference>
<dbReference type="RefSeq" id="NP_231824.1">
    <property type="nucleotide sequence ID" value="NC_002505.1"/>
</dbReference>
<dbReference type="RefSeq" id="WP_001225051.1">
    <property type="nucleotide sequence ID" value="NZ_LT906614.1"/>
</dbReference>
<dbReference type="SMR" id="Q9KQ14"/>
<dbReference type="STRING" id="243277.VC_2193"/>
<dbReference type="DNASU" id="2613233"/>
<dbReference type="EnsemblBacteria" id="AAF95338">
    <property type="protein sequence ID" value="AAF95338"/>
    <property type="gene ID" value="VC_2193"/>
</dbReference>
<dbReference type="KEGG" id="vch:VC_2193"/>
<dbReference type="PATRIC" id="fig|243277.26.peg.2090"/>
<dbReference type="eggNOG" id="COG1706">
    <property type="taxonomic scope" value="Bacteria"/>
</dbReference>
<dbReference type="HOGENOM" id="CLU_045235_1_0_6"/>
<dbReference type="Proteomes" id="UP000000584">
    <property type="component" value="Chromosome 1"/>
</dbReference>
<dbReference type="GO" id="GO:0009428">
    <property type="term" value="C:bacterial-type flagellum basal body, distal rod, P ring"/>
    <property type="evidence" value="ECO:0000318"/>
    <property type="project" value="GO_Central"/>
</dbReference>
<dbReference type="GO" id="GO:0030288">
    <property type="term" value="C:outer membrane-bounded periplasmic space"/>
    <property type="evidence" value="ECO:0007669"/>
    <property type="project" value="InterPro"/>
</dbReference>
<dbReference type="GO" id="GO:0005198">
    <property type="term" value="F:structural molecule activity"/>
    <property type="evidence" value="ECO:0007669"/>
    <property type="project" value="InterPro"/>
</dbReference>
<dbReference type="GO" id="GO:0071973">
    <property type="term" value="P:bacterial-type flagellum-dependent cell motility"/>
    <property type="evidence" value="ECO:0000318"/>
    <property type="project" value="GO_Central"/>
</dbReference>
<dbReference type="HAMAP" id="MF_00416">
    <property type="entry name" value="FlgI"/>
    <property type="match status" value="1"/>
</dbReference>
<dbReference type="InterPro" id="IPR001782">
    <property type="entry name" value="Flag_FlgI"/>
</dbReference>
<dbReference type="NCBIfam" id="NF003676">
    <property type="entry name" value="PRK05303.1"/>
    <property type="match status" value="1"/>
</dbReference>
<dbReference type="PANTHER" id="PTHR30381">
    <property type="entry name" value="FLAGELLAR P-RING PERIPLASMIC PROTEIN FLGI"/>
    <property type="match status" value="1"/>
</dbReference>
<dbReference type="PANTHER" id="PTHR30381:SF0">
    <property type="entry name" value="FLAGELLAR P-RING PROTEIN"/>
    <property type="match status" value="1"/>
</dbReference>
<dbReference type="Pfam" id="PF02119">
    <property type="entry name" value="FlgI"/>
    <property type="match status" value="1"/>
</dbReference>
<dbReference type="PRINTS" id="PR01010">
    <property type="entry name" value="FLGPRINGFLGI"/>
</dbReference>
<comment type="function">
    <text>Assembles around the rod to form the L-ring and probably protects the motor/basal body from shearing forces during rotation.</text>
</comment>
<comment type="subunit">
    <text evidence="1">The basal body constitutes a major portion of the flagellar organelle and consists of four rings (L,P,S, and M) mounted on a central rod.</text>
</comment>
<comment type="subcellular location">
    <subcellularLocation>
        <location evidence="1">Periplasm</location>
    </subcellularLocation>
    <subcellularLocation>
        <location evidence="1">Bacterial flagellum basal body</location>
    </subcellularLocation>
</comment>
<comment type="similarity">
    <text evidence="3">Belongs to the FlgI family.</text>
</comment>
<sequence>MRKFTILLMLLLASSAQAARIKDVAQVAGVRNNQLVGYGLVTGLPGTGESTPFTDQSFNAMLQSFGIQLPPGTKPKTKNVAAVIVTADLPAFSKQGQTIDITVSSIGSAKSLRGGTLMQTFLKGLDGQVYAVAQGNLVVSGFSATGADGSKIVGNNPTVGMISSGAIVEREVPNPFGRGDYITFNLFESDFTTAQRLADAVNQFLGPQMASAVDAASIKVRAPRDLSQRVAFLSAIENLEFNPADSAAKIIVNSRTGTIVVGQNVRLKPAAVTHGGMTVAIKENLNVSQPNALGGGQTVVVPNTEIEVTEKQGKMFKLEPGVTLDDLVRAVNEVGAAPSDLMAILQALKQAGAIEGQLIII</sequence>
<reference key="1">
    <citation type="journal article" date="1998" name="FEMS Microbiol. Lett.">
        <title>Cloning, sequencing and expression of the flagellin core protein and other genes encoding structural proteins of the Vibrio cholerae flagellum.</title>
        <authorList>
            <person name="Das M."/>
            <person name="Chopra A.K."/>
            <person name="Wood T."/>
            <person name="Peterson J.W."/>
        </authorList>
    </citation>
    <scope>NUCLEOTIDE SEQUENCE [GENOMIC DNA]</scope>
    <source>
        <strain>El Tor Inaba V86</strain>
    </source>
</reference>
<reference key="2">
    <citation type="journal article" date="2000" name="Nature">
        <title>DNA sequence of both chromosomes of the cholera pathogen Vibrio cholerae.</title>
        <authorList>
            <person name="Heidelberg J.F."/>
            <person name="Eisen J.A."/>
            <person name="Nelson W.C."/>
            <person name="Clayton R.A."/>
            <person name="Gwinn M.L."/>
            <person name="Dodson R.J."/>
            <person name="Haft D.H."/>
            <person name="Hickey E.K."/>
            <person name="Peterson J.D."/>
            <person name="Umayam L.A."/>
            <person name="Gill S.R."/>
            <person name="Nelson K.E."/>
            <person name="Read T.D."/>
            <person name="Tettelin H."/>
            <person name="Richardson D.L."/>
            <person name="Ermolaeva M.D."/>
            <person name="Vamathevan J.J."/>
            <person name="Bass S."/>
            <person name="Qin H."/>
            <person name="Dragoi I."/>
            <person name="Sellers P."/>
            <person name="McDonald L.A."/>
            <person name="Utterback T.R."/>
            <person name="Fleischmann R.D."/>
            <person name="Nierman W.C."/>
            <person name="White O."/>
            <person name="Salzberg S.L."/>
            <person name="Smith H.O."/>
            <person name="Colwell R.R."/>
            <person name="Mekalanos J.J."/>
            <person name="Venter J.C."/>
            <person name="Fraser C.M."/>
        </authorList>
    </citation>
    <scope>NUCLEOTIDE SEQUENCE [LARGE SCALE GENOMIC DNA]</scope>
    <source>
        <strain>ATCC 39315 / El Tor Inaba N16961</strain>
    </source>
</reference>
<name>FLGI_VIBCH</name>
<keyword id="KW-0975">Bacterial flagellum</keyword>
<keyword id="KW-0574">Periplasm</keyword>
<keyword id="KW-1185">Reference proteome</keyword>
<keyword id="KW-0732">Signal</keyword>
<gene>
    <name type="primary">flgI</name>
    <name type="ordered locus">VC_2193</name>
</gene>
<protein>
    <recommendedName>
        <fullName>Flagellar P-ring protein</fullName>
    </recommendedName>
    <alternativeName>
        <fullName>Basal body P-ring protein</fullName>
    </alternativeName>
</protein>